<accession>P85776</accession>
<protein>
    <recommendedName>
        <fullName evidence="3">Periviscerokinin-3</fullName>
        <shortName evidence="3">SupDi-PVK-3</shortName>
    </recommendedName>
</protein>
<dbReference type="GO" id="GO:0005576">
    <property type="term" value="C:extracellular region"/>
    <property type="evidence" value="ECO:0007669"/>
    <property type="project" value="UniProtKB-SubCell"/>
</dbReference>
<dbReference type="GO" id="GO:0007218">
    <property type="term" value="P:neuropeptide signaling pathway"/>
    <property type="evidence" value="ECO:0007669"/>
    <property type="project" value="UniProtKB-KW"/>
</dbReference>
<dbReference type="InterPro" id="IPR013231">
    <property type="entry name" value="Periviscerokinin"/>
</dbReference>
<dbReference type="Pfam" id="PF08259">
    <property type="entry name" value="Periviscerokin"/>
    <property type="match status" value="1"/>
</dbReference>
<name>PVK3_SUPDI</name>
<reference evidence="4" key="1">
    <citation type="journal article" date="2009" name="BMC Evol. Biol.">
        <title>A proteomic approach for studying insect phylogeny: CAPA peptides of ancient insect taxa (Dictyoptera, Blattoptera) as a test case.</title>
        <authorList>
            <person name="Roth S."/>
            <person name="Fromm B."/>
            <person name="Gaede G."/>
            <person name="Predel R."/>
        </authorList>
    </citation>
    <scope>PROTEIN SEQUENCE</scope>
    <scope>AMIDATION AT VAL-11</scope>
    <source>
        <tissue evidence="2">Abdominal perisympathetic organs</tissue>
    </source>
</reference>
<sequence>GSSGMIPFPRV</sequence>
<keyword id="KW-0027">Amidation</keyword>
<keyword id="KW-0903">Direct protein sequencing</keyword>
<keyword id="KW-0527">Neuropeptide</keyword>
<keyword id="KW-0964">Secreted</keyword>
<evidence type="ECO:0000255" key="1"/>
<evidence type="ECO:0000269" key="2">
    <source>
    </source>
</evidence>
<evidence type="ECO:0000303" key="3">
    <source>
    </source>
</evidence>
<evidence type="ECO:0000305" key="4"/>
<proteinExistence type="evidence at protein level"/>
<feature type="peptide" id="PRO_0000378854" description="Periviscerokinin-3" evidence="2">
    <location>
        <begin position="1"/>
        <end position="11"/>
    </location>
</feature>
<feature type="modified residue" description="Valine amide" evidence="2">
    <location>
        <position position="11"/>
    </location>
</feature>
<organism>
    <name type="scientific">Supella dimidiata</name>
    <name type="common">Cockroach</name>
    <dbReference type="NCBI Taxonomy" id="521517"/>
    <lineage>
        <taxon>Eukaryota</taxon>
        <taxon>Metazoa</taxon>
        <taxon>Ecdysozoa</taxon>
        <taxon>Arthropoda</taxon>
        <taxon>Hexapoda</taxon>
        <taxon>Insecta</taxon>
        <taxon>Pterygota</taxon>
        <taxon>Neoptera</taxon>
        <taxon>Polyneoptera</taxon>
        <taxon>Dictyoptera</taxon>
        <taxon>Blattodea</taxon>
        <taxon>Blaberoidea</taxon>
        <taxon>Ectobiidae</taxon>
        <taxon>Plectopterinae</taxon>
        <taxon>Supella</taxon>
    </lineage>
</organism>
<comment type="function">
    <text evidence="4">Mediates visceral muscle contractile activity (myotropic activity).</text>
</comment>
<comment type="subcellular location">
    <subcellularLocation>
        <location evidence="4">Secreted</location>
    </subcellularLocation>
</comment>
<comment type="similarity">
    <text evidence="1">Belongs to the periviscerokinin family.</text>
</comment>